<reference key="1">
    <citation type="journal article" date="2015" name="Genome Announc.">
        <title>Genome sequence of Aspergillus flavus NRRL 3357, a strain that causes aflatoxin contamination of food and feed.</title>
        <authorList>
            <person name="Nierman W.C."/>
            <person name="Yu J."/>
            <person name="Fedorova-Abrams N.D."/>
            <person name="Losada L."/>
            <person name="Cleveland T.E."/>
            <person name="Bhatnagar D."/>
            <person name="Bennett J.W."/>
            <person name="Dean R."/>
            <person name="Payne G.A."/>
        </authorList>
    </citation>
    <scope>NUCLEOTIDE SEQUENCE [LARGE SCALE GENOMIC DNA]</scope>
    <source>
        <strain>ATCC 200026 / FGSC A1120 / IAM 13836 / NRRL 3357 / JCM 12722 / SRRC 167</strain>
    </source>
</reference>
<dbReference type="EC" id="3.2.1.8"/>
<dbReference type="EMBL" id="EQ963480">
    <property type="protein sequence ID" value="EED48943.1"/>
    <property type="status" value="ALT_INIT"/>
    <property type="molecule type" value="Genomic_DNA"/>
</dbReference>
<dbReference type="RefSeq" id="XP_002380844.1">
    <property type="nucleotide sequence ID" value="XM_002380803.1"/>
</dbReference>
<dbReference type="SMR" id="B8NKE9"/>
<dbReference type="STRING" id="332952.B8NKE9"/>
<dbReference type="GlyCosmos" id="B8NKE9">
    <property type="glycosylation" value="1 site, No reported glycans"/>
</dbReference>
<dbReference type="EnsemblFungi" id="EED48943">
    <property type="protein sequence ID" value="EED48943"/>
    <property type="gene ID" value="AFLA_090240"/>
</dbReference>
<dbReference type="VEuPathDB" id="FungiDB:AFLA_009239"/>
<dbReference type="eggNOG" id="ENOG502RXA7">
    <property type="taxonomic scope" value="Eukaryota"/>
</dbReference>
<dbReference type="BRENDA" id="3.2.1.8">
    <property type="organism ID" value="506"/>
</dbReference>
<dbReference type="UniPathway" id="UPA00114"/>
<dbReference type="GO" id="GO:0005576">
    <property type="term" value="C:extracellular region"/>
    <property type="evidence" value="ECO:0007669"/>
    <property type="project" value="UniProtKB-SubCell"/>
</dbReference>
<dbReference type="GO" id="GO:0031176">
    <property type="term" value="F:endo-1,4-beta-xylanase activity"/>
    <property type="evidence" value="ECO:0000250"/>
    <property type="project" value="UniProtKB"/>
</dbReference>
<dbReference type="GO" id="GO:0045493">
    <property type="term" value="P:xylan catabolic process"/>
    <property type="evidence" value="ECO:0000250"/>
    <property type="project" value="UniProtKB"/>
</dbReference>
<dbReference type="FunFam" id="2.60.120.180:FF:000001">
    <property type="entry name" value="Endo-1,4-beta-xylanase"/>
    <property type="match status" value="1"/>
</dbReference>
<dbReference type="Gene3D" id="2.60.120.180">
    <property type="match status" value="1"/>
</dbReference>
<dbReference type="InterPro" id="IPR013320">
    <property type="entry name" value="ConA-like_dom_sf"/>
</dbReference>
<dbReference type="InterPro" id="IPR013319">
    <property type="entry name" value="GH11/12"/>
</dbReference>
<dbReference type="InterPro" id="IPR018208">
    <property type="entry name" value="GH11_AS_1"/>
</dbReference>
<dbReference type="InterPro" id="IPR033119">
    <property type="entry name" value="GH11_AS_2"/>
</dbReference>
<dbReference type="InterPro" id="IPR033123">
    <property type="entry name" value="GH11_dom"/>
</dbReference>
<dbReference type="InterPro" id="IPR001137">
    <property type="entry name" value="Glyco_hydro_11"/>
</dbReference>
<dbReference type="PANTHER" id="PTHR46828">
    <property type="entry name" value="ENDO-1,4-BETA-XYLANASE A-RELATED"/>
    <property type="match status" value="1"/>
</dbReference>
<dbReference type="PANTHER" id="PTHR46828:SF2">
    <property type="entry name" value="ENDO-1,4-BETA-XYLANASE A-RELATED"/>
    <property type="match status" value="1"/>
</dbReference>
<dbReference type="Pfam" id="PF00457">
    <property type="entry name" value="Glyco_hydro_11"/>
    <property type="match status" value="1"/>
</dbReference>
<dbReference type="PRINTS" id="PR00911">
    <property type="entry name" value="GLHYDRLASE11"/>
</dbReference>
<dbReference type="SUPFAM" id="SSF49899">
    <property type="entry name" value="Concanavalin A-like lectins/glucanases"/>
    <property type="match status" value="1"/>
</dbReference>
<dbReference type="PROSITE" id="PS00776">
    <property type="entry name" value="GH11_1"/>
    <property type="match status" value="1"/>
</dbReference>
<dbReference type="PROSITE" id="PS00777">
    <property type="entry name" value="GH11_2"/>
    <property type="match status" value="1"/>
</dbReference>
<dbReference type="PROSITE" id="PS51761">
    <property type="entry name" value="GH11_3"/>
    <property type="match status" value="1"/>
</dbReference>
<sequence>MVSFSSILLACSAAIGALATPIEPLADHPNEAFNETAFNDLVGRSTPSSTGYNNGYYYSFWTDGGGDVTYTNGNGGSYSVQWSNVGNFVGGKGWNPGSSRAITYSGSFNPSGNGYLAVYGWTTDPLIEYYIVESYGTYNPGSGGTYKGQVTSDGGTYNIYTSVRTNAPSIIGTATFTQFWSVRTSKRVGGTVTTGNHFNAWAKYGLTLGTHNYQIVATEGYQSSGSSAITVY</sequence>
<keyword id="KW-0119">Carbohydrate metabolism</keyword>
<keyword id="KW-0325">Glycoprotein</keyword>
<keyword id="KW-0326">Glycosidase</keyword>
<keyword id="KW-0378">Hydrolase</keyword>
<keyword id="KW-0624">Polysaccharide degradation</keyword>
<keyword id="KW-0964">Secreted</keyword>
<keyword id="KW-0732">Signal</keyword>
<keyword id="KW-0858">Xylan degradation</keyword>
<comment type="function">
    <text evidence="1">Endo-1,4-beta-xylanase involved in the hydrolysis of xylan, a major structural heterogeneous polysaccharide found in plant biomass representing the second most abundant polysaccharide in the biosphere, after cellulose.</text>
</comment>
<comment type="catalytic activity">
    <reaction>
        <text>Endohydrolysis of (1-&gt;4)-beta-D-xylosidic linkages in xylans.</text>
        <dbReference type="EC" id="3.2.1.8"/>
    </reaction>
</comment>
<comment type="pathway">
    <text>Glycan degradation; xylan degradation.</text>
</comment>
<comment type="subcellular location">
    <subcellularLocation>
        <location evidence="1">Secreted</location>
    </subcellularLocation>
</comment>
<comment type="similarity">
    <text evidence="6">Belongs to the glycosyl hydrolase 11 (cellulase G) family.</text>
</comment>
<comment type="sequence caution" evidence="6">
    <conflict type="erroneous initiation">
        <sequence resource="EMBL-CDS" id="EED48943"/>
    </conflict>
</comment>
<gene>
    <name type="primary">xlnA</name>
    <name type="ORF">AFLA_090240</name>
</gene>
<proteinExistence type="inferred from homology"/>
<name>XYNA_ASPFN</name>
<evidence type="ECO:0000250" key="1"/>
<evidence type="ECO:0000255" key="2"/>
<evidence type="ECO:0000255" key="3">
    <source>
        <dbReference type="PROSITE-ProRule" id="PRU01097"/>
    </source>
</evidence>
<evidence type="ECO:0000255" key="4">
    <source>
        <dbReference type="PROSITE-ProRule" id="PRU10062"/>
    </source>
</evidence>
<evidence type="ECO:0000255" key="5">
    <source>
        <dbReference type="PROSITE-ProRule" id="PRU10063"/>
    </source>
</evidence>
<evidence type="ECO:0000305" key="6"/>
<protein>
    <recommendedName>
        <fullName>Probable endo-1,4-beta-xylanase A</fullName>
        <shortName>Xylanase A</shortName>
        <ecNumber>3.2.1.8</ecNumber>
    </recommendedName>
    <alternativeName>
        <fullName>1,4-beta-D-xylan xylanohydrolase A</fullName>
    </alternativeName>
</protein>
<organism>
    <name type="scientific">Aspergillus flavus (strain ATCC 200026 / FGSC A1120 / IAM 13836 / NRRL 3357 / JCM 12722 / SRRC 167)</name>
    <dbReference type="NCBI Taxonomy" id="332952"/>
    <lineage>
        <taxon>Eukaryota</taxon>
        <taxon>Fungi</taxon>
        <taxon>Dikarya</taxon>
        <taxon>Ascomycota</taxon>
        <taxon>Pezizomycotina</taxon>
        <taxon>Eurotiomycetes</taxon>
        <taxon>Eurotiomycetidae</taxon>
        <taxon>Eurotiales</taxon>
        <taxon>Aspergillaceae</taxon>
        <taxon>Aspergillus</taxon>
        <taxon>Aspergillus subgen. Circumdati</taxon>
    </lineage>
</organism>
<accession>B8NKE9</accession>
<feature type="signal peptide" evidence="2">
    <location>
        <begin position="1"/>
        <end position="19"/>
    </location>
</feature>
<feature type="chain" id="PRO_0000393160" description="Probable endo-1,4-beta-xylanase A">
    <location>
        <begin position="20"/>
        <end position="232"/>
    </location>
</feature>
<feature type="domain" description="GH11" evidence="3">
    <location>
        <begin position="44"/>
        <end position="232"/>
    </location>
</feature>
<feature type="active site" description="Nucleophile" evidence="4">
    <location>
        <position position="128"/>
    </location>
</feature>
<feature type="active site" description="Proton donor" evidence="5">
    <location>
        <position position="219"/>
    </location>
</feature>
<feature type="glycosylation site" description="N-linked (GlcNAc...) asparagine" evidence="2">
    <location>
        <position position="34"/>
    </location>
</feature>